<comment type="similarity">
    <text evidence="1">Belongs to the bacterial ribosomal protein bL32 family.</text>
</comment>
<organism>
    <name type="scientific">Maridesulfovibrio salexigens (strain ATCC 14822 / DSM 2638 / NCIMB 8403 / VKM B-1763)</name>
    <name type="common">Desulfovibrio salexigens</name>
    <dbReference type="NCBI Taxonomy" id="526222"/>
    <lineage>
        <taxon>Bacteria</taxon>
        <taxon>Pseudomonadati</taxon>
        <taxon>Thermodesulfobacteriota</taxon>
        <taxon>Desulfovibrionia</taxon>
        <taxon>Desulfovibrionales</taxon>
        <taxon>Desulfovibrionaceae</taxon>
        <taxon>Maridesulfovibrio</taxon>
    </lineage>
</organism>
<evidence type="ECO:0000255" key="1">
    <source>
        <dbReference type="HAMAP-Rule" id="MF_00340"/>
    </source>
</evidence>
<evidence type="ECO:0000256" key="2">
    <source>
        <dbReference type="SAM" id="MobiDB-lite"/>
    </source>
</evidence>
<evidence type="ECO:0000305" key="3"/>
<gene>
    <name evidence="1" type="primary">rpmF</name>
    <name type="ordered locus">Desal_0663</name>
</gene>
<sequence length="59" mass="6617">MAQPKKKTSKSRRNMRRSHDHVATPNVVYCECGEPIIPHRACSSCGSYKGRQVINSEDA</sequence>
<reference key="1">
    <citation type="submission" date="2009-06" db="EMBL/GenBank/DDBJ databases">
        <title>Complete sequence of Desulfovibrio salexigens DSM 2638.</title>
        <authorList>
            <consortium name="US DOE Joint Genome Institute"/>
            <person name="Lucas S."/>
            <person name="Copeland A."/>
            <person name="Lapidus A."/>
            <person name="Glavina del Rio T."/>
            <person name="Tice H."/>
            <person name="Bruce D."/>
            <person name="Goodwin L."/>
            <person name="Pitluck S."/>
            <person name="Munk A.C."/>
            <person name="Brettin T."/>
            <person name="Detter J.C."/>
            <person name="Han C."/>
            <person name="Tapia R."/>
            <person name="Larimer F."/>
            <person name="Land M."/>
            <person name="Hauser L."/>
            <person name="Kyrpides N."/>
            <person name="Anderson I."/>
            <person name="Wall J.D."/>
            <person name="Arkin A.P."/>
            <person name="Dehal P."/>
            <person name="Chivian D."/>
            <person name="Giles B."/>
            <person name="Hazen T.C."/>
        </authorList>
    </citation>
    <scope>NUCLEOTIDE SEQUENCE [LARGE SCALE GENOMIC DNA]</scope>
    <source>
        <strain>ATCC 14822 / DSM 2638 / NCIMB 8403 / VKM B-1763</strain>
    </source>
</reference>
<name>RL32_MARSD</name>
<feature type="chain" id="PRO_1000205258" description="Large ribosomal subunit protein bL32">
    <location>
        <begin position="1"/>
        <end position="59"/>
    </location>
</feature>
<feature type="region of interest" description="Disordered" evidence="2">
    <location>
        <begin position="1"/>
        <end position="20"/>
    </location>
</feature>
<feature type="compositionally biased region" description="Basic residues" evidence="2">
    <location>
        <begin position="1"/>
        <end position="19"/>
    </location>
</feature>
<protein>
    <recommendedName>
        <fullName evidence="1">Large ribosomal subunit protein bL32</fullName>
    </recommendedName>
    <alternativeName>
        <fullName evidence="3">50S ribosomal protein L32</fullName>
    </alternativeName>
</protein>
<dbReference type="EMBL" id="CP001649">
    <property type="protein sequence ID" value="ACS78729.1"/>
    <property type="molecule type" value="Genomic_DNA"/>
</dbReference>
<dbReference type="RefSeq" id="WP_015850548.1">
    <property type="nucleotide sequence ID" value="NC_012881.1"/>
</dbReference>
<dbReference type="SMR" id="C6BYD8"/>
<dbReference type="STRING" id="526222.Desal_0663"/>
<dbReference type="KEGG" id="dsa:Desal_0663"/>
<dbReference type="eggNOG" id="COG0333">
    <property type="taxonomic scope" value="Bacteria"/>
</dbReference>
<dbReference type="HOGENOM" id="CLU_129084_1_3_7"/>
<dbReference type="OrthoDB" id="9801927at2"/>
<dbReference type="Proteomes" id="UP000002601">
    <property type="component" value="Chromosome"/>
</dbReference>
<dbReference type="GO" id="GO:0015934">
    <property type="term" value="C:large ribosomal subunit"/>
    <property type="evidence" value="ECO:0007669"/>
    <property type="project" value="InterPro"/>
</dbReference>
<dbReference type="GO" id="GO:0003735">
    <property type="term" value="F:structural constituent of ribosome"/>
    <property type="evidence" value="ECO:0007669"/>
    <property type="project" value="InterPro"/>
</dbReference>
<dbReference type="GO" id="GO:0006412">
    <property type="term" value="P:translation"/>
    <property type="evidence" value="ECO:0007669"/>
    <property type="project" value="UniProtKB-UniRule"/>
</dbReference>
<dbReference type="Gene3D" id="1.20.5.640">
    <property type="entry name" value="Single helix bin"/>
    <property type="match status" value="1"/>
</dbReference>
<dbReference type="HAMAP" id="MF_00340">
    <property type="entry name" value="Ribosomal_bL32"/>
    <property type="match status" value="1"/>
</dbReference>
<dbReference type="InterPro" id="IPR002677">
    <property type="entry name" value="Ribosomal_bL32"/>
</dbReference>
<dbReference type="InterPro" id="IPR044957">
    <property type="entry name" value="Ribosomal_bL32_bact"/>
</dbReference>
<dbReference type="InterPro" id="IPR011332">
    <property type="entry name" value="Ribosomal_zn-bd"/>
</dbReference>
<dbReference type="NCBIfam" id="TIGR01031">
    <property type="entry name" value="rpmF_bact"/>
    <property type="match status" value="1"/>
</dbReference>
<dbReference type="PANTHER" id="PTHR35534">
    <property type="entry name" value="50S RIBOSOMAL PROTEIN L32"/>
    <property type="match status" value="1"/>
</dbReference>
<dbReference type="PANTHER" id="PTHR35534:SF1">
    <property type="entry name" value="LARGE RIBOSOMAL SUBUNIT PROTEIN BL32"/>
    <property type="match status" value="1"/>
</dbReference>
<dbReference type="Pfam" id="PF01783">
    <property type="entry name" value="Ribosomal_L32p"/>
    <property type="match status" value="1"/>
</dbReference>
<dbReference type="SUPFAM" id="SSF57829">
    <property type="entry name" value="Zn-binding ribosomal proteins"/>
    <property type="match status" value="1"/>
</dbReference>
<keyword id="KW-1185">Reference proteome</keyword>
<keyword id="KW-0687">Ribonucleoprotein</keyword>
<keyword id="KW-0689">Ribosomal protein</keyword>
<proteinExistence type="inferred from homology"/>
<accession>C6BYD8</accession>